<feature type="chain" id="PRO_0000081035" description="DNA-binding transcriptional activator EvgA">
    <location>
        <begin position="1"/>
        <end position="204"/>
    </location>
</feature>
<feature type="domain" description="Response regulatory" evidence="1">
    <location>
        <begin position="2"/>
        <end position="117"/>
    </location>
</feature>
<feature type="domain" description="HTH luxR-type" evidence="2">
    <location>
        <begin position="137"/>
        <end position="202"/>
    </location>
</feature>
<feature type="DNA-binding region" description="H-T-H motif" evidence="2">
    <location>
        <begin position="161"/>
        <end position="180"/>
    </location>
</feature>
<feature type="modified residue" description="4-aspartylphosphate" evidence="1">
    <location>
        <position position="52"/>
    </location>
</feature>
<feature type="strand" evidence="5">
    <location>
        <begin position="2"/>
        <end position="6"/>
    </location>
</feature>
<feature type="helix" evidence="5">
    <location>
        <begin position="10"/>
        <end position="22"/>
    </location>
</feature>
<feature type="strand" evidence="5">
    <location>
        <begin position="25"/>
        <end position="34"/>
    </location>
</feature>
<feature type="helix" evidence="5">
    <location>
        <begin position="37"/>
        <end position="44"/>
    </location>
</feature>
<feature type="strand" evidence="5">
    <location>
        <begin position="47"/>
        <end position="52"/>
    </location>
</feature>
<feature type="strand" evidence="5">
    <location>
        <begin position="56"/>
        <end position="58"/>
    </location>
</feature>
<feature type="helix" evidence="5">
    <location>
        <begin position="60"/>
        <end position="69"/>
    </location>
</feature>
<feature type="strand" evidence="5">
    <location>
        <begin position="74"/>
        <end position="80"/>
    </location>
</feature>
<feature type="helix" evidence="5">
    <location>
        <begin position="88"/>
        <end position="93"/>
    </location>
</feature>
<feature type="strand" evidence="5">
    <location>
        <begin position="97"/>
        <end position="101"/>
    </location>
</feature>
<feature type="helix" evidence="5">
    <location>
        <begin position="102"/>
        <end position="104"/>
    </location>
</feature>
<feature type="helix" evidence="5">
    <location>
        <begin position="107"/>
        <end position="117"/>
    </location>
</feature>
<feature type="helix" evidence="5">
    <location>
        <begin position="127"/>
        <end position="129"/>
    </location>
</feature>
<gene>
    <name type="primary">evgA</name>
    <name type="ordered locus">b2369</name>
    <name type="ordered locus">JW2366</name>
</gene>
<organism>
    <name type="scientific">Escherichia coli (strain K12)</name>
    <dbReference type="NCBI Taxonomy" id="83333"/>
    <lineage>
        <taxon>Bacteria</taxon>
        <taxon>Pseudomonadati</taxon>
        <taxon>Pseudomonadota</taxon>
        <taxon>Gammaproteobacteria</taxon>
        <taxon>Enterobacterales</taxon>
        <taxon>Enterobacteriaceae</taxon>
        <taxon>Escherichia</taxon>
    </lineage>
</organism>
<dbReference type="EMBL" id="D14008">
    <property type="protein sequence ID" value="BAA03107.1"/>
    <property type="molecule type" value="Genomic_DNA"/>
</dbReference>
<dbReference type="EMBL" id="D11142">
    <property type="protein sequence ID" value="BAA01918.1"/>
    <property type="molecule type" value="Genomic_DNA"/>
</dbReference>
<dbReference type="EMBL" id="U00096">
    <property type="protein sequence ID" value="AAC75428.1"/>
    <property type="molecule type" value="Genomic_DNA"/>
</dbReference>
<dbReference type="EMBL" id="AP009048">
    <property type="protein sequence ID" value="BAA16240.1"/>
    <property type="molecule type" value="Genomic_DNA"/>
</dbReference>
<dbReference type="PIR" id="JU0220">
    <property type="entry name" value="JU0220"/>
</dbReference>
<dbReference type="RefSeq" id="NP_416870.1">
    <property type="nucleotide sequence ID" value="NC_000913.3"/>
</dbReference>
<dbReference type="RefSeq" id="WP_000991370.1">
    <property type="nucleotide sequence ID" value="NZ_STEB01000008.1"/>
</dbReference>
<dbReference type="PDB" id="3F6C">
    <property type="method" value="X-ray"/>
    <property type="resolution" value="1.45 A"/>
    <property type="chains" value="A/B=2-133"/>
</dbReference>
<dbReference type="PDBsum" id="3F6C"/>
<dbReference type="SMR" id="P0ACZ4"/>
<dbReference type="BioGRID" id="4260558">
    <property type="interactions" value="145"/>
</dbReference>
<dbReference type="BioGRID" id="851182">
    <property type="interactions" value="9"/>
</dbReference>
<dbReference type="DIP" id="DIP-48087N"/>
<dbReference type="FunCoup" id="P0ACZ4">
    <property type="interactions" value="292"/>
</dbReference>
<dbReference type="IntAct" id="P0ACZ4">
    <property type="interactions" value="15"/>
</dbReference>
<dbReference type="STRING" id="511145.b2369"/>
<dbReference type="iPTMnet" id="P0ACZ4"/>
<dbReference type="jPOST" id="P0ACZ4"/>
<dbReference type="PaxDb" id="511145-b2369"/>
<dbReference type="DNASU" id="946841"/>
<dbReference type="EnsemblBacteria" id="AAC75428">
    <property type="protein sequence ID" value="AAC75428"/>
    <property type="gene ID" value="b2369"/>
</dbReference>
<dbReference type="GeneID" id="75202562"/>
<dbReference type="GeneID" id="946841"/>
<dbReference type="KEGG" id="ecj:JW2366"/>
<dbReference type="KEGG" id="eco:b2369"/>
<dbReference type="KEGG" id="ecoc:C3026_13175"/>
<dbReference type="PATRIC" id="fig|1411691.4.peg.4360"/>
<dbReference type="EchoBASE" id="EB1566"/>
<dbReference type="eggNOG" id="COG2197">
    <property type="taxonomic scope" value="Bacteria"/>
</dbReference>
<dbReference type="HOGENOM" id="CLU_000445_90_1_6"/>
<dbReference type="InParanoid" id="P0ACZ4"/>
<dbReference type="OMA" id="QDYVIPA"/>
<dbReference type="OrthoDB" id="9796655at2"/>
<dbReference type="PhylomeDB" id="P0ACZ4"/>
<dbReference type="BioCyc" id="EcoCyc:EVGA-MONOMER"/>
<dbReference type="EvolutionaryTrace" id="P0ACZ4"/>
<dbReference type="PRO" id="PR:P0ACZ4"/>
<dbReference type="Proteomes" id="UP000000625">
    <property type="component" value="Chromosome"/>
</dbReference>
<dbReference type="GO" id="GO:0005829">
    <property type="term" value="C:cytosol"/>
    <property type="evidence" value="ECO:0000314"/>
    <property type="project" value="EcoCyc"/>
</dbReference>
<dbReference type="GO" id="GO:0043565">
    <property type="term" value="F:sequence-specific DNA binding"/>
    <property type="evidence" value="ECO:0000314"/>
    <property type="project" value="EcoCyc"/>
</dbReference>
<dbReference type="GO" id="GO:0000160">
    <property type="term" value="P:phosphorelay signal transduction system"/>
    <property type="evidence" value="ECO:0007669"/>
    <property type="project" value="UniProtKB-KW"/>
</dbReference>
<dbReference type="GO" id="GO:0006355">
    <property type="term" value="P:regulation of DNA-templated transcription"/>
    <property type="evidence" value="ECO:0000315"/>
    <property type="project" value="EcoCyc"/>
</dbReference>
<dbReference type="CDD" id="cd06170">
    <property type="entry name" value="LuxR_C_like"/>
    <property type="match status" value="1"/>
</dbReference>
<dbReference type="CDD" id="cd17535">
    <property type="entry name" value="REC_NarL-like"/>
    <property type="match status" value="1"/>
</dbReference>
<dbReference type="Gene3D" id="3.40.50.2300">
    <property type="match status" value="1"/>
</dbReference>
<dbReference type="Gene3D" id="1.10.10.10">
    <property type="entry name" value="Winged helix-like DNA-binding domain superfamily/Winged helix DNA-binding domain"/>
    <property type="match status" value="1"/>
</dbReference>
<dbReference type="InterPro" id="IPR011006">
    <property type="entry name" value="CheY-like_superfamily"/>
</dbReference>
<dbReference type="InterPro" id="IPR051015">
    <property type="entry name" value="RcsB_transcriptional_reg"/>
</dbReference>
<dbReference type="InterPro" id="IPR016032">
    <property type="entry name" value="Sig_transdc_resp-reg_C-effctor"/>
</dbReference>
<dbReference type="InterPro" id="IPR001789">
    <property type="entry name" value="Sig_transdc_resp-reg_receiver"/>
</dbReference>
<dbReference type="InterPro" id="IPR000792">
    <property type="entry name" value="Tscrpt_reg_LuxR_C"/>
</dbReference>
<dbReference type="InterPro" id="IPR036388">
    <property type="entry name" value="WH-like_DNA-bd_sf"/>
</dbReference>
<dbReference type="NCBIfam" id="NF007419">
    <property type="entry name" value="PRK09958.1"/>
    <property type="match status" value="1"/>
</dbReference>
<dbReference type="PANTHER" id="PTHR45566">
    <property type="entry name" value="HTH-TYPE TRANSCRIPTIONAL REGULATOR YHJB-RELATED"/>
    <property type="match status" value="1"/>
</dbReference>
<dbReference type="PANTHER" id="PTHR45566:SF2">
    <property type="entry name" value="NARL SUBFAMILY"/>
    <property type="match status" value="1"/>
</dbReference>
<dbReference type="Pfam" id="PF00196">
    <property type="entry name" value="GerE"/>
    <property type="match status" value="1"/>
</dbReference>
<dbReference type="Pfam" id="PF00072">
    <property type="entry name" value="Response_reg"/>
    <property type="match status" value="1"/>
</dbReference>
<dbReference type="PRINTS" id="PR00038">
    <property type="entry name" value="HTHLUXR"/>
</dbReference>
<dbReference type="SMART" id="SM00421">
    <property type="entry name" value="HTH_LUXR"/>
    <property type="match status" value="1"/>
</dbReference>
<dbReference type="SMART" id="SM00448">
    <property type="entry name" value="REC"/>
    <property type="match status" value="1"/>
</dbReference>
<dbReference type="SUPFAM" id="SSF46894">
    <property type="entry name" value="C-terminal effector domain of the bipartite response regulators"/>
    <property type="match status" value="1"/>
</dbReference>
<dbReference type="SUPFAM" id="SSF52172">
    <property type="entry name" value="CheY-like"/>
    <property type="match status" value="1"/>
</dbReference>
<dbReference type="PROSITE" id="PS00622">
    <property type="entry name" value="HTH_LUXR_1"/>
    <property type="match status" value="1"/>
</dbReference>
<dbReference type="PROSITE" id="PS50043">
    <property type="entry name" value="HTH_LUXR_2"/>
    <property type="match status" value="1"/>
</dbReference>
<dbReference type="PROSITE" id="PS50110">
    <property type="entry name" value="RESPONSE_REGULATORY"/>
    <property type="match status" value="1"/>
</dbReference>
<evidence type="ECO:0000255" key="1">
    <source>
        <dbReference type="PROSITE-ProRule" id="PRU00169"/>
    </source>
</evidence>
<evidence type="ECO:0000255" key="2">
    <source>
        <dbReference type="PROSITE-ProRule" id="PRU00411"/>
    </source>
</evidence>
<evidence type="ECO:0000269" key="3">
    <source>
    </source>
</evidence>
<evidence type="ECO:0000305" key="4"/>
<evidence type="ECO:0007829" key="5">
    <source>
        <dbReference type="PDB" id="3F6C"/>
    </source>
</evidence>
<proteinExistence type="evidence at protein level"/>
<sequence>MNAIIIDDHPLAIAAIRNLLIKNDIEILAELTEGGSAVQRVETLKPDIVIIDVDIPGVNGIQVLETLRKRQYSGIIIIVSAKNDHFYGKHCADAGANGFVSKKEGMNNIIAAIEAAKNGYCYFPFSLNRFVGSLTSDQQKLDSLSKQEISVMRYILDGKDNNDIAEKMFISNKTVSTYKSRLMEKLECKSLMDLYTFAQRNKIG</sequence>
<protein>
    <recommendedName>
        <fullName evidence="4">DNA-binding transcriptional activator EvgA</fullName>
    </recommendedName>
</protein>
<accession>P0ACZ4</accession>
<accession>P30854</accession>
<name>EVGA_ECOLI</name>
<reference key="1">
    <citation type="journal article" date="1994" name="Gene">
        <title>Newly identified genes involved in the signal transduction of Escherichia coli K-12.</title>
        <authorList>
            <person name="Utsumi R."/>
            <person name="Katayama S."/>
            <person name="Taniguchi M."/>
            <person name="Horie T."/>
            <person name="Ikeda M."/>
            <person name="Igaki S."/>
            <person name="Nakagawa H."/>
            <person name="Miwa A."/>
            <person name="Tanabe H."/>
            <person name="Noda M."/>
        </authorList>
    </citation>
    <scope>NUCLEOTIDE SEQUENCE [GENOMIC DNA]</scope>
    <source>
        <strain>K12</strain>
    </source>
</reference>
<reference key="2">
    <citation type="journal article" date="1992" name="Nucleic Acids Symp. Ser.">
        <title>Cloning and sequence analysis of the evgAS genes involved in signal transduction of Escherichia coli K-12.</title>
        <authorList>
            <person name="Utsumi R."/>
            <person name="Katayama S."/>
            <person name="Ikeda M."/>
            <person name="Igaki S."/>
            <person name="Nakagawa H."/>
            <person name="Miwa A."/>
            <person name="Taniguchi M."/>
            <person name="Noda M."/>
        </authorList>
    </citation>
    <scope>NUCLEOTIDE SEQUENCE [GENOMIC DNA]</scope>
    <source>
        <strain>K12</strain>
    </source>
</reference>
<reference key="3">
    <citation type="journal article" date="1997" name="DNA Res.">
        <title>Construction of a contiguous 874-kb sequence of the Escherichia coli-K12 genome corresponding to 50.0-68.8 min on the linkage map and analysis of its sequence features.</title>
        <authorList>
            <person name="Yamamoto Y."/>
            <person name="Aiba H."/>
            <person name="Baba T."/>
            <person name="Hayashi K."/>
            <person name="Inada T."/>
            <person name="Isono K."/>
            <person name="Itoh T."/>
            <person name="Kimura S."/>
            <person name="Kitagawa M."/>
            <person name="Makino K."/>
            <person name="Miki T."/>
            <person name="Mitsuhashi N."/>
            <person name="Mizobuchi K."/>
            <person name="Mori H."/>
            <person name="Nakade S."/>
            <person name="Nakamura Y."/>
            <person name="Nashimoto H."/>
            <person name="Oshima T."/>
            <person name="Oyama S."/>
            <person name="Saito N."/>
            <person name="Sampei G."/>
            <person name="Satoh Y."/>
            <person name="Sivasundaram S."/>
            <person name="Tagami H."/>
            <person name="Takahashi H."/>
            <person name="Takeda J."/>
            <person name="Takemoto K."/>
            <person name="Uehara K."/>
            <person name="Wada C."/>
            <person name="Yamagata S."/>
            <person name="Horiuchi T."/>
        </authorList>
    </citation>
    <scope>NUCLEOTIDE SEQUENCE [LARGE SCALE GENOMIC DNA]</scope>
    <source>
        <strain>K12 / W3110 / ATCC 27325 / DSM 5911</strain>
    </source>
</reference>
<reference key="4">
    <citation type="journal article" date="1997" name="Science">
        <title>The complete genome sequence of Escherichia coli K-12.</title>
        <authorList>
            <person name="Blattner F.R."/>
            <person name="Plunkett G. III"/>
            <person name="Bloch C.A."/>
            <person name="Perna N.T."/>
            <person name="Burland V."/>
            <person name="Riley M."/>
            <person name="Collado-Vides J."/>
            <person name="Glasner J.D."/>
            <person name="Rode C.K."/>
            <person name="Mayhew G.F."/>
            <person name="Gregor J."/>
            <person name="Davis N.W."/>
            <person name="Kirkpatrick H.A."/>
            <person name="Goeden M.A."/>
            <person name="Rose D.J."/>
            <person name="Mau B."/>
            <person name="Shao Y."/>
        </authorList>
    </citation>
    <scope>NUCLEOTIDE SEQUENCE [LARGE SCALE GENOMIC DNA]</scope>
    <source>
        <strain>K12 / MG1655 / ATCC 47076</strain>
    </source>
</reference>
<reference key="5">
    <citation type="journal article" date="2006" name="Mol. Syst. Biol.">
        <title>Highly accurate genome sequences of Escherichia coli K-12 strains MG1655 and W3110.</title>
        <authorList>
            <person name="Hayashi K."/>
            <person name="Morooka N."/>
            <person name="Yamamoto Y."/>
            <person name="Fujita K."/>
            <person name="Isono K."/>
            <person name="Choi S."/>
            <person name="Ohtsubo E."/>
            <person name="Baba T."/>
            <person name="Wanner B.L."/>
            <person name="Mori H."/>
            <person name="Horiuchi T."/>
        </authorList>
    </citation>
    <scope>NUCLEOTIDE SEQUENCE [LARGE SCALE GENOMIC DNA]</scope>
    <source>
        <strain>K12 / W3110 / ATCC 27325 / DSM 5911</strain>
    </source>
</reference>
<reference key="6">
    <citation type="journal article" date="1998" name="Mol. Microbiol.">
        <title>Specificity of the BvgAS and EvgAS phosphorelay is mediated by the C-terminal HPt domains of the sensor proteins.</title>
        <authorList>
            <person name="Perraud A.-L."/>
            <person name="Kimmel B."/>
            <person name="Weiss V."/>
            <person name="Gross R."/>
        </authorList>
    </citation>
    <scope>CHARACTERIZATION</scope>
</reference>
<reference key="7">
    <citation type="journal article" date="2000" name="Biochim. Biophys. Acta">
        <title>Dimerization of signalling modules of the EvgAS and BvgAS phosphorelay systems.</title>
        <authorList>
            <person name="Perraud A.-L."/>
            <person name="Rippe K."/>
            <person name="Bantscheff M."/>
            <person name="Glocker M."/>
            <person name="Lucassen M."/>
            <person name="Jung K."/>
            <person name="Sebald W."/>
            <person name="Weiss V."/>
            <person name="Gross R."/>
        </authorList>
    </citation>
    <scope>CHARACTERIZATION</scope>
    <scope>MASS SPECTROMETRY</scope>
</reference>
<reference key="8">
    <citation type="journal article" date="2000" name="Biosci. Biotechnol. Biochem.">
        <title>Transcription of emrKY is regulated by the EvgA-EvgS two-component system in Escherichia coli K-12.</title>
        <authorList>
            <person name="Kato A."/>
            <person name="Ohnishi H."/>
            <person name="Yamamoto K."/>
            <person name="Furuta E."/>
            <person name="Tanabe H."/>
            <person name="Utsumi R."/>
        </authorList>
    </citation>
    <scope>CHARACTERIZATION</scope>
    <source>
        <strain>K12</strain>
    </source>
</reference>
<reference key="9">
    <citation type="journal article" date="2001" name="J. Bacteriol.">
        <title>Overexpression of the response regulator evgA of the two-component signal transduction system modulates multidrug resistance conferred by multidrug resistance transporters.</title>
        <authorList>
            <person name="Nishino K."/>
            <person name="Yamaguchi A."/>
        </authorList>
    </citation>
    <scope>CHARACTERIZATION</scope>
    <source>
        <strain>K12 / W3104 / ATCC 19020</strain>
    </source>
</reference>
<comment type="function">
    <text>Member of the two-component regulatory system EvgS/EvgA. Regulates the expression of emrKY operon and yfdX. Also seems to control expression of at least one other multidrug efflux operon.</text>
</comment>
<comment type="subunit">
    <text>Homodimer.</text>
</comment>
<comment type="interaction">
    <interactant intactId="EBI-548694">
        <id>P0ACZ4</id>
    </interactant>
    <interactant intactId="EBI-1113197">
        <id>P0AFB8</id>
        <label>glnG</label>
    </interactant>
    <organismsDiffer>false</organismsDiffer>
    <experiments>3</experiments>
</comment>
<comment type="interaction">
    <interactant intactId="EBI-548694">
        <id>P0ACZ4</id>
    </interactant>
    <interactant intactId="EBI-8767901">
        <id>P45577</id>
        <label>proQ</label>
    </interactant>
    <organismsDiffer>false</organismsDiffer>
    <experiments>3</experiments>
</comment>
<comment type="subcellular location">
    <subcellularLocation>
        <location evidence="4">Cytoplasm</location>
    </subcellularLocation>
</comment>
<comment type="PTM">
    <text>Phosphorylated by EvgS.</text>
</comment>
<comment type="mass spectrometry"/>
<keyword id="KW-0002">3D-structure</keyword>
<keyword id="KW-0010">Activator</keyword>
<keyword id="KW-0963">Cytoplasm</keyword>
<keyword id="KW-0238">DNA-binding</keyword>
<keyword id="KW-0597">Phosphoprotein</keyword>
<keyword id="KW-1185">Reference proteome</keyword>
<keyword id="KW-0804">Transcription</keyword>
<keyword id="KW-0805">Transcription regulation</keyword>
<keyword id="KW-0902">Two-component regulatory system</keyword>